<comment type="function">
    <text evidence="1">NDH shuttles electrons from NAD(P)H:plastoquinone, via FMN and iron-sulfur (Fe-S) centers, to quinones in the photosynthetic chain and possibly in a chloroplast respiratory chain. The immediate electron acceptor for the enzyme in this species is believed to be plastoquinone. Couples the redox reaction to proton translocation, and thus conserves the redox energy in a proton gradient.</text>
</comment>
<comment type="catalytic activity">
    <reaction evidence="1">
        <text>a plastoquinone + NADH + (n+1) H(+)(in) = a plastoquinol + NAD(+) + n H(+)(out)</text>
        <dbReference type="Rhea" id="RHEA:42608"/>
        <dbReference type="Rhea" id="RHEA-COMP:9561"/>
        <dbReference type="Rhea" id="RHEA-COMP:9562"/>
        <dbReference type="ChEBI" id="CHEBI:15378"/>
        <dbReference type="ChEBI" id="CHEBI:17757"/>
        <dbReference type="ChEBI" id="CHEBI:57540"/>
        <dbReference type="ChEBI" id="CHEBI:57945"/>
        <dbReference type="ChEBI" id="CHEBI:62192"/>
    </reaction>
</comment>
<comment type="catalytic activity">
    <reaction evidence="1">
        <text>a plastoquinone + NADPH + (n+1) H(+)(in) = a plastoquinol + NADP(+) + n H(+)(out)</text>
        <dbReference type="Rhea" id="RHEA:42612"/>
        <dbReference type="Rhea" id="RHEA-COMP:9561"/>
        <dbReference type="Rhea" id="RHEA-COMP:9562"/>
        <dbReference type="ChEBI" id="CHEBI:15378"/>
        <dbReference type="ChEBI" id="CHEBI:17757"/>
        <dbReference type="ChEBI" id="CHEBI:57783"/>
        <dbReference type="ChEBI" id="CHEBI:58349"/>
        <dbReference type="ChEBI" id="CHEBI:62192"/>
    </reaction>
</comment>
<comment type="subunit">
    <text evidence="1">NDH is composed of at least 16 different subunits, 5 of which are encoded in the nucleus.</text>
</comment>
<comment type="subcellular location">
    <subcellularLocation>
        <location evidence="1">Plastid</location>
        <location evidence="1">Chloroplast thylakoid membrane</location>
        <topology evidence="1">Multi-pass membrane protein</topology>
    </subcellularLocation>
</comment>
<comment type="RNA editing">
    <location>
        <position position="156" evidence="2"/>
    </location>
    <location>
        <position position="196" evidence="2"/>
    </location>
    <location>
        <position position="204" evidence="2"/>
    </location>
    <location>
        <position position="246" evidence="2"/>
    </location>
    <location>
        <position position="277" evidence="2"/>
    </location>
    <location>
        <position position="494" evidence="2"/>
    </location>
</comment>
<comment type="similarity">
    <text evidence="1">Belongs to the complex I subunit 2 family.</text>
</comment>
<reference key="1">
    <citation type="journal article" date="2004" name="Curr. Genet.">
        <title>Structural features and transcript-editing analysis of sugarcane (Saccharum officinarum L.) chloroplast genome.</title>
        <authorList>
            <person name="Calsa T. Jr."/>
            <person name="Carraro D.M."/>
            <person name="Benatti M.R."/>
            <person name="Barbosa A.C."/>
            <person name="Kitajima J.P."/>
            <person name="Carrer H."/>
        </authorList>
    </citation>
    <scope>NUCLEOTIDE SEQUENCE [LARGE SCALE GENOMIC DNA]</scope>
    <scope>RNA EDITING</scope>
    <source>
        <strain>cv. SP-80-3280</strain>
    </source>
</reference>
<geneLocation type="chloroplast"/>
<name>NU2C2_SACHY</name>
<feature type="chain" id="PRO_0000391308" description="NAD(P)H-quinone oxidoreductase subunit 2 B, chloroplastic">
    <location>
        <begin position="1"/>
        <end position="510"/>
    </location>
</feature>
<feature type="transmembrane region" description="Helical" evidence="1">
    <location>
        <begin position="31"/>
        <end position="51"/>
    </location>
</feature>
<feature type="transmembrane region" description="Helical" evidence="1">
    <location>
        <begin position="59"/>
        <end position="79"/>
    </location>
</feature>
<feature type="transmembrane region" description="Helical" evidence="1">
    <location>
        <begin position="99"/>
        <end position="119"/>
    </location>
</feature>
<feature type="transmembrane region" description="Helical" evidence="1">
    <location>
        <begin position="124"/>
        <end position="144"/>
    </location>
</feature>
<feature type="transmembrane region" description="Helical" evidence="1">
    <location>
        <begin position="149"/>
        <end position="169"/>
    </location>
</feature>
<feature type="transmembrane region" description="Helical" evidence="1">
    <location>
        <begin position="184"/>
        <end position="204"/>
    </location>
</feature>
<feature type="transmembrane region" description="Helical" evidence="1">
    <location>
        <begin position="229"/>
        <end position="249"/>
    </location>
</feature>
<feature type="transmembrane region" description="Helical" evidence="1">
    <location>
        <begin position="261"/>
        <end position="281"/>
    </location>
</feature>
<feature type="transmembrane region" description="Helical" evidence="1">
    <location>
        <begin position="295"/>
        <end position="315"/>
    </location>
</feature>
<feature type="transmembrane region" description="Helical" evidence="1">
    <location>
        <begin position="323"/>
        <end position="343"/>
    </location>
</feature>
<feature type="transmembrane region" description="Helical" evidence="1">
    <location>
        <begin position="354"/>
        <end position="374"/>
    </location>
</feature>
<feature type="transmembrane region" description="Helical" evidence="1">
    <location>
        <begin position="395"/>
        <end position="415"/>
    </location>
</feature>
<feature type="transmembrane region" description="Helical" evidence="1">
    <location>
        <begin position="418"/>
        <end position="438"/>
    </location>
</feature>
<feature type="transmembrane region" description="Helical" evidence="1">
    <location>
        <begin position="484"/>
        <end position="504"/>
    </location>
</feature>
<organism>
    <name type="scientific">Saccharum hybrid</name>
    <name type="common">Sugarcane</name>
    <dbReference type="NCBI Taxonomy" id="15819"/>
    <lineage>
        <taxon>Eukaryota</taxon>
        <taxon>Viridiplantae</taxon>
        <taxon>Streptophyta</taxon>
        <taxon>Embryophyta</taxon>
        <taxon>Tracheophyta</taxon>
        <taxon>Spermatophyta</taxon>
        <taxon>Magnoliopsida</taxon>
        <taxon>Liliopsida</taxon>
        <taxon>Poales</taxon>
        <taxon>Poaceae</taxon>
        <taxon>PACMAD clade</taxon>
        <taxon>Panicoideae</taxon>
        <taxon>Andropogonodae</taxon>
        <taxon>Andropogoneae</taxon>
        <taxon>Saccharinae</taxon>
        <taxon>Saccharum</taxon>
    </lineage>
</organism>
<accession>P0CD41</accession>
<accession>P0C159</accession>
<proteinExistence type="evidence at transcript level"/>
<protein>
    <recommendedName>
        <fullName evidence="1">NAD(P)H-quinone oxidoreductase subunit 2 B, chloroplastic</fullName>
        <ecNumber evidence="1">7.1.1.-</ecNumber>
    </recommendedName>
    <alternativeName>
        <fullName evidence="1">NAD(P)H dehydrogenase, subunit 2 B</fullName>
    </alternativeName>
    <alternativeName>
        <fullName evidence="1">NADH-plastoquinone oxidoreductase subunit 2 B</fullName>
    </alternativeName>
</protein>
<evidence type="ECO:0000255" key="1">
    <source>
        <dbReference type="HAMAP-Rule" id="MF_00445"/>
    </source>
</evidence>
<evidence type="ECO:0000269" key="2">
    <source>
    </source>
</evidence>
<gene>
    <name evidence="1" type="primary">ndhB2</name>
    <name type="synonym">ndhB-B</name>
    <name type="ordered locus">PS066</name>
</gene>
<dbReference type="EC" id="7.1.1.-" evidence="1"/>
<dbReference type="EMBL" id="AE009947">
    <property type="status" value="NOT_ANNOTATED_CDS"/>
    <property type="molecule type" value="Genomic_DNA"/>
</dbReference>
<dbReference type="SMR" id="P0CD41"/>
<dbReference type="GO" id="GO:0009535">
    <property type="term" value="C:chloroplast thylakoid membrane"/>
    <property type="evidence" value="ECO:0007669"/>
    <property type="project" value="UniProtKB-SubCell"/>
</dbReference>
<dbReference type="GO" id="GO:0008137">
    <property type="term" value="F:NADH dehydrogenase (ubiquinone) activity"/>
    <property type="evidence" value="ECO:0007669"/>
    <property type="project" value="InterPro"/>
</dbReference>
<dbReference type="GO" id="GO:0048038">
    <property type="term" value="F:quinone binding"/>
    <property type="evidence" value="ECO:0007669"/>
    <property type="project" value="UniProtKB-KW"/>
</dbReference>
<dbReference type="GO" id="GO:0042773">
    <property type="term" value="P:ATP synthesis coupled electron transport"/>
    <property type="evidence" value="ECO:0007669"/>
    <property type="project" value="InterPro"/>
</dbReference>
<dbReference type="GO" id="GO:0019684">
    <property type="term" value="P:photosynthesis, light reaction"/>
    <property type="evidence" value="ECO:0007669"/>
    <property type="project" value="UniProtKB-UniRule"/>
</dbReference>
<dbReference type="HAMAP" id="MF_00445">
    <property type="entry name" value="NDH1_NuoN_1"/>
    <property type="match status" value="1"/>
</dbReference>
<dbReference type="InterPro" id="IPR010096">
    <property type="entry name" value="NADH-Q_OxRdtase_suN/2"/>
</dbReference>
<dbReference type="InterPro" id="IPR001750">
    <property type="entry name" value="ND/Mrp_TM"/>
</dbReference>
<dbReference type="InterPro" id="IPR045693">
    <property type="entry name" value="Ndh2_N"/>
</dbReference>
<dbReference type="NCBIfam" id="TIGR01770">
    <property type="entry name" value="NDH_I_N"/>
    <property type="match status" value="1"/>
</dbReference>
<dbReference type="NCBIfam" id="NF002701">
    <property type="entry name" value="PRK02504.1"/>
    <property type="match status" value="1"/>
</dbReference>
<dbReference type="PANTHER" id="PTHR22773">
    <property type="entry name" value="NADH DEHYDROGENASE"/>
    <property type="match status" value="1"/>
</dbReference>
<dbReference type="Pfam" id="PF19530">
    <property type="entry name" value="Ndh2_N"/>
    <property type="match status" value="1"/>
</dbReference>
<dbReference type="Pfam" id="PF00361">
    <property type="entry name" value="Proton_antipo_M"/>
    <property type="match status" value="1"/>
</dbReference>
<dbReference type="PRINTS" id="PR01434">
    <property type="entry name" value="NADHDHGNASE5"/>
</dbReference>
<sequence length="510" mass="56931">MIWHVQNENFILDSTRIFMKAFHLLLFNGSFIFPECILIFGLILLLMIDLTSDQKDRPWFYFISSTSLVISITALLFRWREEPIISFSGNFQTNNFNEIFQFLILLCSTLCIPLSVEYIECTEMAITEFLLFVLTATLGGMFLCGANDLITIFVALECFSLCSYLLSGYTKRDLRSNEATMKYLLMGGASSSILVLGFSWLYGLSGGEIELQEIVNGLINTQMYNSPGISIALIFITVGLGFKLSLAPFHQWTPDVYEGSPTPVVAFLSVTSKVAALALATRILDIPFYFSSNEWHLLLEILAILSMILGNLLAITQTSMKRMLAYSSIGQIGYVIIGIIVGDSNDGYASMITYMLFYISMNLGTFACIVLFGLRTGTDNIRDYAGLYTKDPFLALSLALCLLSLGGLPPLAGFFGKLYLFWCGWQAGLYFLVSIGLLTSVLSIYYYLKIIKLLMTGRNQEITPYVRNYRRSPLRSNNSIELSMTVCVIASTILGISMNPILAIAQDTLF</sequence>
<keyword id="KW-0150">Chloroplast</keyword>
<keyword id="KW-0472">Membrane</keyword>
<keyword id="KW-0520">NAD</keyword>
<keyword id="KW-0521">NADP</keyword>
<keyword id="KW-0934">Plastid</keyword>
<keyword id="KW-0618">Plastoquinone</keyword>
<keyword id="KW-0874">Quinone</keyword>
<keyword id="KW-0691">RNA editing</keyword>
<keyword id="KW-0793">Thylakoid</keyword>
<keyword id="KW-1278">Translocase</keyword>
<keyword id="KW-0812">Transmembrane</keyword>
<keyword id="KW-1133">Transmembrane helix</keyword>
<keyword id="KW-0813">Transport</keyword>